<proteinExistence type="inferred from homology"/>
<protein>
    <recommendedName>
        <fullName evidence="1">Gamma-glutamyl phosphate reductase</fullName>
        <shortName evidence="1">GPR</shortName>
        <ecNumber evidence="1">1.2.1.41</ecNumber>
    </recommendedName>
    <alternativeName>
        <fullName evidence="1">Glutamate-5-semialdehyde dehydrogenase</fullName>
    </alternativeName>
    <alternativeName>
        <fullName evidence="1">Glutamyl-gamma-semialdehyde dehydrogenase</fullName>
        <shortName evidence="1">GSA dehydrogenase</shortName>
    </alternativeName>
</protein>
<gene>
    <name evidence="1" type="primary">proA</name>
    <name type="ordered locus">Nwi_0444</name>
</gene>
<evidence type="ECO:0000255" key="1">
    <source>
        <dbReference type="HAMAP-Rule" id="MF_00412"/>
    </source>
</evidence>
<evidence type="ECO:0000305" key="2"/>
<organism>
    <name type="scientific">Nitrobacter winogradskyi (strain ATCC 25391 / DSM 10237 / CIP 104748 / NCIMB 11846 / Nb-255)</name>
    <dbReference type="NCBI Taxonomy" id="323098"/>
    <lineage>
        <taxon>Bacteria</taxon>
        <taxon>Pseudomonadati</taxon>
        <taxon>Pseudomonadota</taxon>
        <taxon>Alphaproteobacteria</taxon>
        <taxon>Hyphomicrobiales</taxon>
        <taxon>Nitrobacteraceae</taxon>
        <taxon>Nitrobacter</taxon>
    </lineage>
</organism>
<feature type="chain" id="PRO_0000230006" description="Gamma-glutamyl phosphate reductase">
    <location>
        <begin position="1"/>
        <end position="426"/>
    </location>
</feature>
<sequence length="426" mass="44718">MKAIGAPADLPVLMGDLAAQAREAARSLGLASTAQKNEALDAMARAIRSNAAAILQANAQDVADARAGGATAAFLDRLTLTQARVEAMADGVKVVREIDDPVGRVTERWQRPNGMTIERVRVPLGVVAVIFESRPNVCADAGVLCLKSGNAVILRGGSESFRSCRAIHACLVEGLREARLPEAAITLVPTRDRAAVGLLLSGMNGGIDVIVPRGGKSLVARVEAEARVPVFAHLEGVNHVYVDGAADLAMAKAVVLNSKMRRPGVCGAAETLLVDRSGVRDILKPLVEALIEAGCEVRGDSDVQGVDPRVRSAADSDWNTEYGDAIISARVVDGCGGAIDHIQRHGSRHTDAIVTEDPETAARFLNEVDSAIVLHNASTQFADGGEFGFGAEIGIATGKFHARGPVGAEQLTSFKYRVHGDGQVRP</sequence>
<dbReference type="EC" id="1.2.1.41" evidence="1"/>
<dbReference type="EMBL" id="CP000115">
    <property type="protein sequence ID" value="ABA03711.1"/>
    <property type="status" value="ALT_INIT"/>
    <property type="molecule type" value="Genomic_DNA"/>
</dbReference>
<dbReference type="RefSeq" id="WP_011313775.1">
    <property type="nucleotide sequence ID" value="NC_007406.1"/>
</dbReference>
<dbReference type="SMR" id="Q3SVI0"/>
<dbReference type="STRING" id="323098.Nwi_0444"/>
<dbReference type="KEGG" id="nwi:Nwi_0444"/>
<dbReference type="eggNOG" id="COG0014">
    <property type="taxonomic scope" value="Bacteria"/>
</dbReference>
<dbReference type="HOGENOM" id="CLU_030231_0_0_5"/>
<dbReference type="OrthoDB" id="9809970at2"/>
<dbReference type="UniPathway" id="UPA00098">
    <property type="reaction ID" value="UER00360"/>
</dbReference>
<dbReference type="Proteomes" id="UP000002531">
    <property type="component" value="Chromosome"/>
</dbReference>
<dbReference type="GO" id="GO:0005737">
    <property type="term" value="C:cytoplasm"/>
    <property type="evidence" value="ECO:0007669"/>
    <property type="project" value="UniProtKB-SubCell"/>
</dbReference>
<dbReference type="GO" id="GO:0004350">
    <property type="term" value="F:glutamate-5-semialdehyde dehydrogenase activity"/>
    <property type="evidence" value="ECO:0007669"/>
    <property type="project" value="UniProtKB-UniRule"/>
</dbReference>
<dbReference type="GO" id="GO:0050661">
    <property type="term" value="F:NADP binding"/>
    <property type="evidence" value="ECO:0007669"/>
    <property type="project" value="InterPro"/>
</dbReference>
<dbReference type="GO" id="GO:0055129">
    <property type="term" value="P:L-proline biosynthetic process"/>
    <property type="evidence" value="ECO:0007669"/>
    <property type="project" value="UniProtKB-UniRule"/>
</dbReference>
<dbReference type="CDD" id="cd07079">
    <property type="entry name" value="ALDH_F18-19_ProA-GPR"/>
    <property type="match status" value="1"/>
</dbReference>
<dbReference type="Gene3D" id="3.40.605.10">
    <property type="entry name" value="Aldehyde Dehydrogenase, Chain A, domain 1"/>
    <property type="match status" value="1"/>
</dbReference>
<dbReference type="Gene3D" id="3.40.309.10">
    <property type="entry name" value="Aldehyde Dehydrogenase, Chain A, domain 2"/>
    <property type="match status" value="1"/>
</dbReference>
<dbReference type="HAMAP" id="MF_00412">
    <property type="entry name" value="ProA"/>
    <property type="match status" value="1"/>
</dbReference>
<dbReference type="InterPro" id="IPR016161">
    <property type="entry name" value="Ald_DH/histidinol_DH"/>
</dbReference>
<dbReference type="InterPro" id="IPR016163">
    <property type="entry name" value="Ald_DH_C"/>
</dbReference>
<dbReference type="InterPro" id="IPR016162">
    <property type="entry name" value="Ald_DH_N"/>
</dbReference>
<dbReference type="InterPro" id="IPR015590">
    <property type="entry name" value="Aldehyde_DH_dom"/>
</dbReference>
<dbReference type="InterPro" id="IPR020593">
    <property type="entry name" value="G-glutamylP_reductase_CS"/>
</dbReference>
<dbReference type="InterPro" id="IPR012134">
    <property type="entry name" value="Glu-5-SA_DH"/>
</dbReference>
<dbReference type="InterPro" id="IPR000965">
    <property type="entry name" value="GPR_dom"/>
</dbReference>
<dbReference type="NCBIfam" id="NF001221">
    <property type="entry name" value="PRK00197.1"/>
    <property type="match status" value="1"/>
</dbReference>
<dbReference type="NCBIfam" id="TIGR00407">
    <property type="entry name" value="proA"/>
    <property type="match status" value="1"/>
</dbReference>
<dbReference type="PANTHER" id="PTHR11063:SF8">
    <property type="entry name" value="DELTA-1-PYRROLINE-5-CARBOXYLATE SYNTHASE"/>
    <property type="match status" value="1"/>
</dbReference>
<dbReference type="PANTHER" id="PTHR11063">
    <property type="entry name" value="GLUTAMATE SEMIALDEHYDE DEHYDROGENASE"/>
    <property type="match status" value="1"/>
</dbReference>
<dbReference type="Pfam" id="PF00171">
    <property type="entry name" value="Aldedh"/>
    <property type="match status" value="1"/>
</dbReference>
<dbReference type="PIRSF" id="PIRSF000151">
    <property type="entry name" value="GPR"/>
    <property type="match status" value="1"/>
</dbReference>
<dbReference type="SUPFAM" id="SSF53720">
    <property type="entry name" value="ALDH-like"/>
    <property type="match status" value="1"/>
</dbReference>
<dbReference type="PROSITE" id="PS01223">
    <property type="entry name" value="PROA"/>
    <property type="match status" value="1"/>
</dbReference>
<reference key="1">
    <citation type="journal article" date="2006" name="Appl. Environ. Microbiol.">
        <title>Genome sequence of the chemolithoautotrophic nitrite-oxidizing bacterium Nitrobacter winogradskyi Nb-255.</title>
        <authorList>
            <person name="Starkenburg S.R."/>
            <person name="Chain P.S.G."/>
            <person name="Sayavedra-Soto L.A."/>
            <person name="Hauser L."/>
            <person name="Land M.L."/>
            <person name="Larimer F.W."/>
            <person name="Malfatti S.A."/>
            <person name="Klotz M.G."/>
            <person name="Bottomley P.J."/>
            <person name="Arp D.J."/>
            <person name="Hickey W.J."/>
        </authorList>
    </citation>
    <scope>NUCLEOTIDE SEQUENCE [LARGE SCALE GENOMIC DNA]</scope>
    <source>
        <strain>ATCC 25391 / DSM 10237 / CIP 104748 / NCIMB 11846 / Nb-255</strain>
    </source>
</reference>
<keyword id="KW-0028">Amino-acid biosynthesis</keyword>
<keyword id="KW-0963">Cytoplasm</keyword>
<keyword id="KW-0521">NADP</keyword>
<keyword id="KW-0560">Oxidoreductase</keyword>
<keyword id="KW-0641">Proline biosynthesis</keyword>
<keyword id="KW-1185">Reference proteome</keyword>
<name>PROA_NITWN</name>
<accession>Q3SVI0</accession>
<comment type="function">
    <text evidence="1">Catalyzes the NADPH-dependent reduction of L-glutamate 5-phosphate into L-glutamate 5-semialdehyde and phosphate. The product spontaneously undergoes cyclization to form 1-pyrroline-5-carboxylate.</text>
</comment>
<comment type="catalytic activity">
    <reaction evidence="1">
        <text>L-glutamate 5-semialdehyde + phosphate + NADP(+) = L-glutamyl 5-phosphate + NADPH + H(+)</text>
        <dbReference type="Rhea" id="RHEA:19541"/>
        <dbReference type="ChEBI" id="CHEBI:15378"/>
        <dbReference type="ChEBI" id="CHEBI:43474"/>
        <dbReference type="ChEBI" id="CHEBI:57783"/>
        <dbReference type="ChEBI" id="CHEBI:58066"/>
        <dbReference type="ChEBI" id="CHEBI:58274"/>
        <dbReference type="ChEBI" id="CHEBI:58349"/>
        <dbReference type="EC" id="1.2.1.41"/>
    </reaction>
</comment>
<comment type="pathway">
    <text evidence="1">Amino-acid biosynthesis; L-proline biosynthesis; L-glutamate 5-semialdehyde from L-glutamate: step 2/2.</text>
</comment>
<comment type="subcellular location">
    <subcellularLocation>
        <location evidence="1">Cytoplasm</location>
    </subcellularLocation>
</comment>
<comment type="similarity">
    <text evidence="1">Belongs to the gamma-glutamyl phosphate reductase family.</text>
</comment>
<comment type="sequence caution" evidence="2">
    <conflict type="erroneous initiation">
        <sequence resource="EMBL-CDS" id="ABA03711"/>
    </conflict>
</comment>